<organism>
    <name type="scientific">Pectobacterium carotovorum</name>
    <name type="common">Erwinia carotovora</name>
    <dbReference type="NCBI Taxonomy" id="554"/>
    <lineage>
        <taxon>Bacteria</taxon>
        <taxon>Pseudomonadati</taxon>
        <taxon>Pseudomonadota</taxon>
        <taxon>Gammaproteobacteria</taxon>
        <taxon>Enterobacterales</taxon>
        <taxon>Pectobacteriaceae</taxon>
        <taxon>Pectobacterium</taxon>
    </lineage>
</organism>
<comment type="function">
    <text evidence="1">Functions in complex with FlhC as a master transcriptional regulator that regulates transcription of several flagellar and non-flagellar operons by binding to their promoter region. Activates expression of class 2 flagellar genes, including fliA, which is a flagellum-specific sigma factor that turns on the class 3 genes. Also regulates genes whose products function in a variety of physiological pathways.</text>
</comment>
<comment type="subunit">
    <text evidence="1">Homodimer; disulfide-linked. Forms a heterohexamer composed of two FlhC and four FlhD subunits. Each FlhC binds a FlhD dimer, forming a heterotrimer, and a hexamer assembles by dimerization of two heterotrimers.</text>
</comment>
<comment type="subcellular location">
    <subcellularLocation>
        <location evidence="1">Cytoplasm</location>
    </subcellularLocation>
</comment>
<comment type="domain">
    <text evidence="1">The C-terminal region contains a putative helix-turn-helix (HTH) motif, suggesting that this region may bind DNA.</text>
</comment>
<comment type="similarity">
    <text evidence="1">Belongs to the FlhD family.</text>
</comment>
<dbReference type="EMBL" id="AF130387">
    <property type="protein sequence ID" value="AAD31817.1"/>
    <property type="molecule type" value="Genomic_DNA"/>
</dbReference>
<dbReference type="SMR" id="Q9X600"/>
<dbReference type="GO" id="GO:0005737">
    <property type="term" value="C:cytoplasm"/>
    <property type="evidence" value="ECO:0007669"/>
    <property type="project" value="UniProtKB-SubCell"/>
</dbReference>
<dbReference type="GO" id="GO:0003677">
    <property type="term" value="F:DNA binding"/>
    <property type="evidence" value="ECO:0007669"/>
    <property type="project" value="UniProtKB-UniRule"/>
</dbReference>
<dbReference type="GO" id="GO:0044780">
    <property type="term" value="P:bacterial-type flagellum assembly"/>
    <property type="evidence" value="ECO:0007669"/>
    <property type="project" value="InterPro"/>
</dbReference>
<dbReference type="GO" id="GO:0045893">
    <property type="term" value="P:positive regulation of DNA-templated transcription"/>
    <property type="evidence" value="ECO:0007669"/>
    <property type="project" value="InterPro"/>
</dbReference>
<dbReference type="GO" id="GO:1902208">
    <property type="term" value="P:regulation of bacterial-type flagellum assembly"/>
    <property type="evidence" value="ECO:0007669"/>
    <property type="project" value="UniProtKB-UniRule"/>
</dbReference>
<dbReference type="Gene3D" id="1.10.4000.10">
    <property type="entry name" value="Flagellar transcriptional activator FlhD"/>
    <property type="match status" value="1"/>
</dbReference>
<dbReference type="HAMAP" id="MF_00725">
    <property type="entry name" value="FlhD"/>
    <property type="match status" value="1"/>
</dbReference>
<dbReference type="InterPro" id="IPR023559">
    <property type="entry name" value="Flagellar_FlhD"/>
</dbReference>
<dbReference type="InterPro" id="IPR036194">
    <property type="entry name" value="FlhD_sf"/>
</dbReference>
<dbReference type="Pfam" id="PF05247">
    <property type="entry name" value="FlhD"/>
    <property type="match status" value="1"/>
</dbReference>
<dbReference type="SUPFAM" id="SSF63592">
    <property type="entry name" value="Flagellar transcriptional activator FlhD"/>
    <property type="match status" value="1"/>
</dbReference>
<reference key="1">
    <citation type="submission" date="1999-02" db="EMBL/GenBank/DDBJ databases">
        <title>Regulation of low molecular weight bacteriocin biosynthesis by FlhC and FlhD.</title>
        <authorList>
            <person name="Chuang D.Y."/>
        </authorList>
    </citation>
    <scope>NUCLEOTIDE SEQUENCE [GENOMIC DNA]</scope>
</reference>
<proteinExistence type="inferred from homology"/>
<feature type="chain" id="PRO_0000182717" description="Flagellar transcriptional regulator FlhD">
    <location>
        <begin position="1"/>
        <end position="124"/>
    </location>
</feature>
<feature type="disulfide bond" description="Interchain" evidence="1">
    <location>
        <position position="71"/>
    </location>
</feature>
<evidence type="ECO:0000255" key="1">
    <source>
        <dbReference type="HAMAP-Rule" id="MF_00725"/>
    </source>
</evidence>
<accession>Q9X600</accession>
<name>FLHD_PECCA</name>
<gene>
    <name evidence="1" type="primary">flhD</name>
</gene>
<sequence length="124" mass="13843">MGNMGTSELLKHIYDINLSYLLLAQRLINDEKAFCKVFVGGIQGKGGAGYLDATGLLPQMVKLAETNQLICHFRFRRITITIQSLDSGNQRVDDLQQIHTGILLSSNLLQQLTSKEENLPKKRA</sequence>
<keyword id="KW-0010">Activator</keyword>
<keyword id="KW-1005">Bacterial flagellum biogenesis</keyword>
<keyword id="KW-0963">Cytoplasm</keyword>
<keyword id="KW-1015">Disulfide bond</keyword>
<keyword id="KW-0238">DNA-binding</keyword>
<keyword id="KW-0804">Transcription</keyword>
<keyword id="KW-0805">Transcription regulation</keyword>
<protein>
    <recommendedName>
        <fullName evidence="1">Flagellar transcriptional regulator FlhD</fullName>
    </recommendedName>
</protein>